<name>TOTX_DROME</name>
<feature type="signal peptide" evidence="1">
    <location>
        <begin position="1"/>
        <end position="22"/>
    </location>
</feature>
<feature type="chain" id="PRO_0000355000" description="Protein Turandot X">
    <location>
        <begin position="23"/>
        <end position="142"/>
    </location>
</feature>
<feature type="sequence conflict" description="In Ref. 1; AAK64526." evidence="3" ref="1">
    <original>S</original>
    <variation>A</variation>
    <location>
        <position position="102"/>
    </location>
</feature>
<feature type="sequence conflict" description="In Ref. 1; AAK64526." evidence="3" ref="1">
    <original>R</original>
    <variation>Q</variation>
    <location>
        <position position="117"/>
    </location>
</feature>
<dbReference type="EMBL" id="AY035993">
    <property type="protein sequence ID" value="AAK64526.1"/>
    <property type="molecule type" value="mRNA"/>
</dbReference>
<dbReference type="EMBL" id="AE014297">
    <property type="protein sequence ID" value="AAN13843.1"/>
    <property type="molecule type" value="Genomic_DNA"/>
</dbReference>
<dbReference type="EMBL" id="BT023313">
    <property type="protein sequence ID" value="AAY55729.1"/>
    <property type="molecule type" value="mRNA"/>
</dbReference>
<dbReference type="RefSeq" id="NP_536781.2">
    <property type="nucleotide sequence ID" value="NM_080520.3"/>
</dbReference>
<dbReference type="FunCoup" id="Q8IN41">
    <property type="interactions" value="43"/>
</dbReference>
<dbReference type="IntAct" id="Q8IN41">
    <property type="interactions" value="3"/>
</dbReference>
<dbReference type="STRING" id="7227.FBpp0083389"/>
<dbReference type="PaxDb" id="7227-FBpp0083389"/>
<dbReference type="DNASU" id="117460"/>
<dbReference type="EnsemblMetazoa" id="FBtr0083985">
    <property type="protein sequence ID" value="FBpp0083389"/>
    <property type="gene ID" value="FBgn0044810"/>
</dbReference>
<dbReference type="GeneID" id="117460"/>
<dbReference type="KEGG" id="dme:Dmel_CG31193"/>
<dbReference type="UCSC" id="CG31193-RA">
    <property type="organism name" value="d. melanogaster"/>
</dbReference>
<dbReference type="AGR" id="FB:FBgn0044810"/>
<dbReference type="CTD" id="117460"/>
<dbReference type="FlyBase" id="FBgn0044810">
    <property type="gene designation" value="TotX"/>
</dbReference>
<dbReference type="VEuPathDB" id="VectorBase:FBgn0044810"/>
<dbReference type="HOGENOM" id="CLU_1817777_0_0_1"/>
<dbReference type="InParanoid" id="Q8IN41"/>
<dbReference type="OMA" id="QFERFIH"/>
<dbReference type="OrthoDB" id="7850164at2759"/>
<dbReference type="PhylomeDB" id="Q8IN41"/>
<dbReference type="BioGRID-ORCS" id="117460">
    <property type="hits" value="0 hits in 1 CRISPR screen"/>
</dbReference>
<dbReference type="GenomeRNAi" id="117460"/>
<dbReference type="PRO" id="PR:Q8IN41"/>
<dbReference type="Proteomes" id="UP000000803">
    <property type="component" value="Chromosome 3R"/>
</dbReference>
<dbReference type="Bgee" id="FBgn0044810">
    <property type="expression patterns" value="Expressed in fat body cell in arthropod fat body and 40 other cell types or tissues"/>
</dbReference>
<dbReference type="ExpressionAtlas" id="Q8IN41">
    <property type="expression patterns" value="baseline and differential"/>
</dbReference>
<dbReference type="GO" id="GO:0005576">
    <property type="term" value="C:extracellular region"/>
    <property type="evidence" value="ECO:0000255"/>
    <property type="project" value="FlyBase"/>
</dbReference>
<dbReference type="GO" id="GO:0005615">
    <property type="term" value="C:extracellular space"/>
    <property type="evidence" value="ECO:0000314"/>
    <property type="project" value="UniProtKB"/>
</dbReference>
<dbReference type="GO" id="GO:0034605">
    <property type="term" value="P:cellular response to heat"/>
    <property type="evidence" value="ECO:0000270"/>
    <property type="project" value="FlyBase"/>
</dbReference>
<dbReference type="GO" id="GO:0034599">
    <property type="term" value="P:cellular response to oxidative stress"/>
    <property type="evidence" value="ECO:0000270"/>
    <property type="project" value="FlyBase"/>
</dbReference>
<dbReference type="GO" id="GO:0045087">
    <property type="term" value="P:innate immune response"/>
    <property type="evidence" value="ECO:0007669"/>
    <property type="project" value="UniProtKB-KW"/>
</dbReference>
<dbReference type="GO" id="GO:0009617">
    <property type="term" value="P:response to bacterium"/>
    <property type="evidence" value="ECO:0000314"/>
    <property type="project" value="UniProtKB"/>
</dbReference>
<dbReference type="GO" id="GO:0009408">
    <property type="term" value="P:response to heat"/>
    <property type="evidence" value="ECO:0000314"/>
    <property type="project" value="UniProtKB"/>
</dbReference>
<dbReference type="GO" id="GO:0006979">
    <property type="term" value="P:response to oxidative stress"/>
    <property type="evidence" value="ECO:0000314"/>
    <property type="project" value="UniProtKB"/>
</dbReference>
<dbReference type="InterPro" id="IPR010825">
    <property type="entry name" value="Turandot"/>
</dbReference>
<dbReference type="Pfam" id="PF07240">
    <property type="entry name" value="Turandot"/>
    <property type="match status" value="1"/>
</dbReference>
<protein>
    <recommendedName>
        <fullName>Protein Turandot X</fullName>
    </recommendedName>
</protein>
<comment type="function">
    <text evidence="2">A humoral factor that may play a role in stress tolerance.</text>
</comment>
<comment type="subcellular location">
    <subcellularLocation>
        <location evidence="2 3">Secreted</location>
    </subcellularLocation>
</comment>
<comment type="developmental stage">
    <text evidence="2">Expressed at very low levels.</text>
</comment>
<comment type="induction">
    <text evidence="2">By a variety of stressful conditions including bacterial infection, heat shock and paraquat feeding.</text>
</comment>
<comment type="similarity">
    <text evidence="1">Belongs to the Turandot family.</text>
</comment>
<keyword id="KW-0391">Immunity</keyword>
<keyword id="KW-0399">Innate immunity</keyword>
<keyword id="KW-1185">Reference proteome</keyword>
<keyword id="KW-0964">Secreted</keyword>
<keyword id="KW-0732">Signal</keyword>
<reference evidence="3 4" key="1">
    <citation type="journal article" date="2001" name="Biochem. Biophys. Res. Commun.">
        <title>A family of Turandot-related genes in the humoral stress response of Drosophila.</title>
        <authorList>
            <person name="Ekengren S."/>
            <person name="Hultmark D."/>
        </authorList>
    </citation>
    <scope>NUCLEOTIDE SEQUENCE [MRNA]</scope>
    <scope>POSSIBLE FUNCTION</scope>
    <scope>DEVELOPMENTAL STAGE</scope>
    <scope>INDUCTION</scope>
    <source>
        <strain evidence="4">Canton-S</strain>
        <tissue evidence="2">Embryo</tissue>
    </source>
</reference>
<reference evidence="5" key="2">
    <citation type="journal article" date="2000" name="Science">
        <title>The genome sequence of Drosophila melanogaster.</title>
        <authorList>
            <person name="Adams M.D."/>
            <person name="Celniker S.E."/>
            <person name="Holt R.A."/>
            <person name="Evans C.A."/>
            <person name="Gocayne J.D."/>
            <person name="Amanatides P.G."/>
            <person name="Scherer S.E."/>
            <person name="Li P.W."/>
            <person name="Hoskins R.A."/>
            <person name="Galle R.F."/>
            <person name="George R.A."/>
            <person name="Lewis S.E."/>
            <person name="Richards S."/>
            <person name="Ashburner M."/>
            <person name="Henderson S.N."/>
            <person name="Sutton G.G."/>
            <person name="Wortman J.R."/>
            <person name="Yandell M.D."/>
            <person name="Zhang Q."/>
            <person name="Chen L.X."/>
            <person name="Brandon R.C."/>
            <person name="Rogers Y.-H.C."/>
            <person name="Blazej R.G."/>
            <person name="Champe M."/>
            <person name="Pfeiffer B.D."/>
            <person name="Wan K.H."/>
            <person name="Doyle C."/>
            <person name="Baxter E.G."/>
            <person name="Helt G."/>
            <person name="Nelson C.R."/>
            <person name="Miklos G.L.G."/>
            <person name="Abril J.F."/>
            <person name="Agbayani A."/>
            <person name="An H.-J."/>
            <person name="Andrews-Pfannkoch C."/>
            <person name="Baldwin D."/>
            <person name="Ballew R.M."/>
            <person name="Basu A."/>
            <person name="Baxendale J."/>
            <person name="Bayraktaroglu L."/>
            <person name="Beasley E.M."/>
            <person name="Beeson K.Y."/>
            <person name="Benos P.V."/>
            <person name="Berman B.P."/>
            <person name="Bhandari D."/>
            <person name="Bolshakov S."/>
            <person name="Borkova D."/>
            <person name="Botchan M.R."/>
            <person name="Bouck J."/>
            <person name="Brokstein P."/>
            <person name="Brottier P."/>
            <person name="Burtis K.C."/>
            <person name="Busam D.A."/>
            <person name="Butler H."/>
            <person name="Cadieu E."/>
            <person name="Center A."/>
            <person name="Chandra I."/>
            <person name="Cherry J.M."/>
            <person name="Cawley S."/>
            <person name="Dahlke C."/>
            <person name="Davenport L.B."/>
            <person name="Davies P."/>
            <person name="de Pablos B."/>
            <person name="Delcher A."/>
            <person name="Deng Z."/>
            <person name="Mays A.D."/>
            <person name="Dew I."/>
            <person name="Dietz S.M."/>
            <person name="Dodson K."/>
            <person name="Doup L.E."/>
            <person name="Downes M."/>
            <person name="Dugan-Rocha S."/>
            <person name="Dunkov B.C."/>
            <person name="Dunn P."/>
            <person name="Durbin K.J."/>
            <person name="Evangelista C.C."/>
            <person name="Ferraz C."/>
            <person name="Ferriera S."/>
            <person name="Fleischmann W."/>
            <person name="Fosler C."/>
            <person name="Gabrielian A.E."/>
            <person name="Garg N.S."/>
            <person name="Gelbart W.M."/>
            <person name="Glasser K."/>
            <person name="Glodek A."/>
            <person name="Gong F."/>
            <person name="Gorrell J.H."/>
            <person name="Gu Z."/>
            <person name="Guan P."/>
            <person name="Harris M."/>
            <person name="Harris N.L."/>
            <person name="Harvey D.A."/>
            <person name="Heiman T.J."/>
            <person name="Hernandez J.R."/>
            <person name="Houck J."/>
            <person name="Hostin D."/>
            <person name="Houston K.A."/>
            <person name="Howland T.J."/>
            <person name="Wei M.-H."/>
            <person name="Ibegwam C."/>
            <person name="Jalali M."/>
            <person name="Kalush F."/>
            <person name="Karpen G.H."/>
            <person name="Ke Z."/>
            <person name="Kennison J.A."/>
            <person name="Ketchum K.A."/>
            <person name="Kimmel B.E."/>
            <person name="Kodira C.D."/>
            <person name="Kraft C.L."/>
            <person name="Kravitz S."/>
            <person name="Kulp D."/>
            <person name="Lai Z."/>
            <person name="Lasko P."/>
            <person name="Lei Y."/>
            <person name="Levitsky A.A."/>
            <person name="Li J.H."/>
            <person name="Li Z."/>
            <person name="Liang Y."/>
            <person name="Lin X."/>
            <person name="Liu X."/>
            <person name="Mattei B."/>
            <person name="McIntosh T.C."/>
            <person name="McLeod M.P."/>
            <person name="McPherson D."/>
            <person name="Merkulov G."/>
            <person name="Milshina N.V."/>
            <person name="Mobarry C."/>
            <person name="Morris J."/>
            <person name="Moshrefi A."/>
            <person name="Mount S.M."/>
            <person name="Moy M."/>
            <person name="Murphy B."/>
            <person name="Murphy L."/>
            <person name="Muzny D.M."/>
            <person name="Nelson D.L."/>
            <person name="Nelson D.R."/>
            <person name="Nelson K.A."/>
            <person name="Nixon K."/>
            <person name="Nusskern D.R."/>
            <person name="Pacleb J.M."/>
            <person name="Palazzolo M."/>
            <person name="Pittman G.S."/>
            <person name="Pan S."/>
            <person name="Pollard J."/>
            <person name="Puri V."/>
            <person name="Reese M.G."/>
            <person name="Reinert K."/>
            <person name="Remington K."/>
            <person name="Saunders R.D.C."/>
            <person name="Scheeler F."/>
            <person name="Shen H."/>
            <person name="Shue B.C."/>
            <person name="Siden-Kiamos I."/>
            <person name="Simpson M."/>
            <person name="Skupski M.P."/>
            <person name="Smith T.J."/>
            <person name="Spier E."/>
            <person name="Spradling A.C."/>
            <person name="Stapleton M."/>
            <person name="Strong R."/>
            <person name="Sun E."/>
            <person name="Svirskas R."/>
            <person name="Tector C."/>
            <person name="Turner R."/>
            <person name="Venter E."/>
            <person name="Wang A.H."/>
            <person name="Wang X."/>
            <person name="Wang Z.-Y."/>
            <person name="Wassarman D.A."/>
            <person name="Weinstock G.M."/>
            <person name="Weissenbach J."/>
            <person name="Williams S.M."/>
            <person name="Woodage T."/>
            <person name="Worley K.C."/>
            <person name="Wu D."/>
            <person name="Yang S."/>
            <person name="Yao Q.A."/>
            <person name="Ye J."/>
            <person name="Yeh R.-F."/>
            <person name="Zaveri J.S."/>
            <person name="Zhan M."/>
            <person name="Zhang G."/>
            <person name="Zhao Q."/>
            <person name="Zheng L."/>
            <person name="Zheng X.H."/>
            <person name="Zhong F.N."/>
            <person name="Zhong W."/>
            <person name="Zhou X."/>
            <person name="Zhu S.C."/>
            <person name="Zhu X."/>
            <person name="Smith H.O."/>
            <person name="Gibbs R.A."/>
            <person name="Myers E.W."/>
            <person name="Rubin G.M."/>
            <person name="Venter J.C."/>
        </authorList>
    </citation>
    <scope>NUCLEOTIDE SEQUENCE [LARGE SCALE GENOMIC DNA]</scope>
    <source>
        <strain>Berkeley</strain>
    </source>
</reference>
<reference evidence="3 5" key="3">
    <citation type="journal article" date="2002" name="Genome Biol.">
        <title>Annotation of the Drosophila melanogaster euchromatic genome: a systematic review.</title>
        <authorList>
            <person name="Misra S."/>
            <person name="Crosby M.A."/>
            <person name="Mungall C.J."/>
            <person name="Matthews B.B."/>
            <person name="Campbell K.S."/>
            <person name="Hradecky P."/>
            <person name="Huang Y."/>
            <person name="Kaminker J.S."/>
            <person name="Millburn G.H."/>
            <person name="Prochnik S.E."/>
            <person name="Smith C.D."/>
            <person name="Tupy J.L."/>
            <person name="Whitfield E.J."/>
            <person name="Bayraktaroglu L."/>
            <person name="Berman B.P."/>
            <person name="Bettencourt B.R."/>
            <person name="Celniker S.E."/>
            <person name="de Grey A.D.N.J."/>
            <person name="Drysdale R.A."/>
            <person name="Harris N.L."/>
            <person name="Richter J."/>
            <person name="Russo S."/>
            <person name="Schroeder A.J."/>
            <person name="Shu S.Q."/>
            <person name="Stapleton M."/>
            <person name="Yamada C."/>
            <person name="Ashburner M."/>
            <person name="Gelbart W.M."/>
            <person name="Rubin G.M."/>
            <person name="Lewis S.E."/>
        </authorList>
    </citation>
    <scope>GENOME REANNOTATION</scope>
    <source>
        <strain>Berkeley</strain>
    </source>
</reference>
<reference evidence="6" key="4">
    <citation type="submission" date="2005-05" db="EMBL/GenBank/DDBJ databases">
        <authorList>
            <person name="Stapleton M."/>
            <person name="Carlson J.W."/>
            <person name="Chavez C."/>
            <person name="Frise E."/>
            <person name="George R.A."/>
            <person name="Pacleb J.M."/>
            <person name="Park S."/>
            <person name="Wan K.H."/>
            <person name="Yu C."/>
            <person name="Celniker S.E."/>
        </authorList>
    </citation>
    <scope>NUCLEOTIDE SEQUENCE [LARGE SCALE MRNA]</scope>
    <source>
        <strain>Berkeley</strain>
    </source>
</reference>
<accession>Q8IN41</accession>
<accession>Q962D6</accession>
<proteinExistence type="evidence at transcript level"/>
<evidence type="ECO:0000255" key="1"/>
<evidence type="ECO:0000269" key="2">
    <source>
    </source>
</evidence>
<evidence type="ECO:0000305" key="3"/>
<evidence type="ECO:0000312" key="4">
    <source>
        <dbReference type="EMBL" id="AAK64526.1"/>
    </source>
</evidence>
<evidence type="ECO:0000312" key="5">
    <source>
        <dbReference type="EMBL" id="AAN13843.1"/>
    </source>
</evidence>
<evidence type="ECO:0000312" key="6">
    <source>
        <dbReference type="EMBL" id="AAY55729.1"/>
    </source>
</evidence>
<evidence type="ECO:0000312" key="7">
    <source>
        <dbReference type="FlyBase" id="FBgn0044810"/>
    </source>
</evidence>
<organism>
    <name type="scientific">Drosophila melanogaster</name>
    <name type="common">Fruit fly</name>
    <dbReference type="NCBI Taxonomy" id="7227"/>
    <lineage>
        <taxon>Eukaryota</taxon>
        <taxon>Metazoa</taxon>
        <taxon>Ecdysozoa</taxon>
        <taxon>Arthropoda</taxon>
        <taxon>Hexapoda</taxon>
        <taxon>Insecta</taxon>
        <taxon>Pterygota</taxon>
        <taxon>Neoptera</taxon>
        <taxon>Endopterygota</taxon>
        <taxon>Diptera</taxon>
        <taxon>Brachycera</taxon>
        <taxon>Muscomorpha</taxon>
        <taxon>Ephydroidea</taxon>
        <taxon>Drosophilidae</taxon>
        <taxon>Drosophila</taxon>
        <taxon>Sophophora</taxon>
    </lineage>
</organism>
<gene>
    <name evidence="5 7" type="primary">TotX</name>
    <name type="ORF">CG31193</name>
</gene>
<sequence>MGLSIGSLLICVFLGIVPFATANTNSSSYEEHRNYLLNIFHNPFVNDSIKEKNIPQLIAFYQRYPTDVPLSDADRQQFERFIHDYREYRAVLVDGAPPQGGSFGNIFGHFLGRVGTRYISSLFNKKREERKSNHAYIIEDYN</sequence>